<proteinExistence type="inferred from homology"/>
<organism>
    <name type="scientific">Moorella thermoacetica (strain ATCC 39073 / JCM 9320)</name>
    <dbReference type="NCBI Taxonomy" id="264732"/>
    <lineage>
        <taxon>Bacteria</taxon>
        <taxon>Bacillati</taxon>
        <taxon>Bacillota</taxon>
        <taxon>Clostridia</taxon>
        <taxon>Moorellales</taxon>
        <taxon>Moorellaceae</taxon>
        <taxon>Moorella</taxon>
    </lineage>
</organism>
<sequence>MRPIAIIDYGMGNLLSVQKALDRLGYPVEVTDDPGEITAAPGVILPGVGAFADAMANLQQKGLVAAIREVAERGVPLLGICLGLQLLFSTSEEGGQVAGLDLLPGEVKRLPAGIKVPHMGWNQVRFPRPGALFRGIPGGTDFYFVHSYYIVPREEEVVTGTTEYGLEFAVSIQRGNLFGVQFHPEKSSRRGLEVLKNFGELVRHAGNAGH</sequence>
<comment type="function">
    <text evidence="1">IGPS catalyzes the conversion of PRFAR and glutamine to IGP, AICAR and glutamate. The HisH subunit catalyzes the hydrolysis of glutamine to glutamate and ammonia as part of the synthesis of IGP and AICAR. The resulting ammonia molecule is channeled to the active site of HisF.</text>
</comment>
<comment type="catalytic activity">
    <reaction evidence="1">
        <text>5-[(5-phospho-1-deoxy-D-ribulos-1-ylimino)methylamino]-1-(5-phospho-beta-D-ribosyl)imidazole-4-carboxamide + L-glutamine = D-erythro-1-(imidazol-4-yl)glycerol 3-phosphate + 5-amino-1-(5-phospho-beta-D-ribosyl)imidazole-4-carboxamide + L-glutamate + H(+)</text>
        <dbReference type="Rhea" id="RHEA:24793"/>
        <dbReference type="ChEBI" id="CHEBI:15378"/>
        <dbReference type="ChEBI" id="CHEBI:29985"/>
        <dbReference type="ChEBI" id="CHEBI:58278"/>
        <dbReference type="ChEBI" id="CHEBI:58359"/>
        <dbReference type="ChEBI" id="CHEBI:58475"/>
        <dbReference type="ChEBI" id="CHEBI:58525"/>
        <dbReference type="EC" id="4.3.2.10"/>
    </reaction>
</comment>
<comment type="catalytic activity">
    <reaction evidence="1">
        <text>L-glutamine + H2O = L-glutamate + NH4(+)</text>
        <dbReference type="Rhea" id="RHEA:15889"/>
        <dbReference type="ChEBI" id="CHEBI:15377"/>
        <dbReference type="ChEBI" id="CHEBI:28938"/>
        <dbReference type="ChEBI" id="CHEBI:29985"/>
        <dbReference type="ChEBI" id="CHEBI:58359"/>
        <dbReference type="EC" id="3.5.1.2"/>
    </reaction>
</comment>
<comment type="pathway">
    <text evidence="1">Amino-acid biosynthesis; L-histidine biosynthesis; L-histidine from 5-phospho-alpha-D-ribose 1-diphosphate: step 5/9.</text>
</comment>
<comment type="subunit">
    <text evidence="1">Heterodimer of HisH and HisF.</text>
</comment>
<comment type="subcellular location">
    <subcellularLocation>
        <location evidence="1">Cytoplasm</location>
    </subcellularLocation>
</comment>
<protein>
    <recommendedName>
        <fullName evidence="1">Imidazole glycerol phosphate synthase subunit HisH</fullName>
        <ecNumber evidence="1">4.3.2.10</ecNumber>
    </recommendedName>
    <alternativeName>
        <fullName evidence="1">IGP synthase glutaminase subunit</fullName>
        <ecNumber evidence="1">3.5.1.2</ecNumber>
    </alternativeName>
    <alternativeName>
        <fullName evidence="1">IGP synthase subunit HisH</fullName>
    </alternativeName>
    <alternativeName>
        <fullName evidence="1">ImGP synthase subunit HisH</fullName>
        <shortName evidence="1">IGPS subunit HisH</shortName>
    </alternativeName>
</protein>
<reference key="1">
    <citation type="journal article" date="2008" name="Environ. Microbiol.">
        <title>The complete genome sequence of Moorella thermoacetica (f. Clostridium thermoaceticum).</title>
        <authorList>
            <person name="Pierce E."/>
            <person name="Xie G."/>
            <person name="Barabote R.D."/>
            <person name="Saunders E."/>
            <person name="Han C.S."/>
            <person name="Detter J.C."/>
            <person name="Richardson P."/>
            <person name="Brettin T.S."/>
            <person name="Das A."/>
            <person name="Ljungdahl L.G."/>
            <person name="Ragsdale S.W."/>
        </authorList>
    </citation>
    <scope>NUCLEOTIDE SEQUENCE [LARGE SCALE GENOMIC DNA]</scope>
    <source>
        <strain>ATCC 39073 / JCM 9320</strain>
    </source>
</reference>
<feature type="chain" id="PRO_0000231735" description="Imidazole glycerol phosphate synthase subunit HisH">
    <location>
        <begin position="1"/>
        <end position="210"/>
    </location>
</feature>
<feature type="domain" description="Glutamine amidotransferase type-1" evidence="1">
    <location>
        <begin position="3"/>
        <end position="208"/>
    </location>
</feature>
<feature type="active site" description="Nucleophile" evidence="1">
    <location>
        <position position="81"/>
    </location>
</feature>
<feature type="active site" evidence="1">
    <location>
        <position position="183"/>
    </location>
</feature>
<feature type="active site" evidence="1">
    <location>
        <position position="185"/>
    </location>
</feature>
<gene>
    <name evidence="1" type="primary">hisH</name>
    <name type="ordered locus">Moth_2033</name>
</gene>
<name>HIS5_MOOTA</name>
<accession>Q2RGW0</accession>
<dbReference type="EC" id="4.3.2.10" evidence="1"/>
<dbReference type="EC" id="3.5.1.2" evidence="1"/>
<dbReference type="EMBL" id="CP000232">
    <property type="protein sequence ID" value="ABC20329.1"/>
    <property type="molecule type" value="Genomic_DNA"/>
</dbReference>
<dbReference type="RefSeq" id="YP_430872.1">
    <property type="nucleotide sequence ID" value="NC_007644.1"/>
</dbReference>
<dbReference type="SMR" id="Q2RGW0"/>
<dbReference type="STRING" id="264732.Moth_2033"/>
<dbReference type="EnsemblBacteria" id="ABC20329">
    <property type="protein sequence ID" value="ABC20329"/>
    <property type="gene ID" value="Moth_2033"/>
</dbReference>
<dbReference type="KEGG" id="mta:Moth_2033"/>
<dbReference type="PATRIC" id="fig|264732.11.peg.2208"/>
<dbReference type="eggNOG" id="COG0118">
    <property type="taxonomic scope" value="Bacteria"/>
</dbReference>
<dbReference type="HOGENOM" id="CLU_071837_2_2_9"/>
<dbReference type="OrthoDB" id="9807137at2"/>
<dbReference type="UniPathway" id="UPA00031">
    <property type="reaction ID" value="UER00010"/>
</dbReference>
<dbReference type="GO" id="GO:0005737">
    <property type="term" value="C:cytoplasm"/>
    <property type="evidence" value="ECO:0007669"/>
    <property type="project" value="UniProtKB-SubCell"/>
</dbReference>
<dbReference type="GO" id="GO:0004359">
    <property type="term" value="F:glutaminase activity"/>
    <property type="evidence" value="ECO:0007669"/>
    <property type="project" value="UniProtKB-EC"/>
</dbReference>
<dbReference type="GO" id="GO:0000107">
    <property type="term" value="F:imidazoleglycerol-phosphate synthase activity"/>
    <property type="evidence" value="ECO:0007669"/>
    <property type="project" value="UniProtKB-UniRule"/>
</dbReference>
<dbReference type="GO" id="GO:0016829">
    <property type="term" value="F:lyase activity"/>
    <property type="evidence" value="ECO:0007669"/>
    <property type="project" value="UniProtKB-KW"/>
</dbReference>
<dbReference type="GO" id="GO:0000105">
    <property type="term" value="P:L-histidine biosynthetic process"/>
    <property type="evidence" value="ECO:0007669"/>
    <property type="project" value="UniProtKB-UniRule"/>
</dbReference>
<dbReference type="CDD" id="cd01748">
    <property type="entry name" value="GATase1_IGP_Synthase"/>
    <property type="match status" value="1"/>
</dbReference>
<dbReference type="FunFam" id="3.40.50.880:FF:000009">
    <property type="entry name" value="Imidazole glycerol phosphate synthase subunit HisH"/>
    <property type="match status" value="1"/>
</dbReference>
<dbReference type="Gene3D" id="3.40.50.880">
    <property type="match status" value="1"/>
</dbReference>
<dbReference type="HAMAP" id="MF_00278">
    <property type="entry name" value="HisH"/>
    <property type="match status" value="1"/>
</dbReference>
<dbReference type="InterPro" id="IPR029062">
    <property type="entry name" value="Class_I_gatase-like"/>
</dbReference>
<dbReference type="InterPro" id="IPR017926">
    <property type="entry name" value="GATASE"/>
</dbReference>
<dbReference type="InterPro" id="IPR010139">
    <property type="entry name" value="Imidazole-glycPsynth_HisH"/>
</dbReference>
<dbReference type="NCBIfam" id="TIGR01855">
    <property type="entry name" value="IMP_synth_hisH"/>
    <property type="match status" value="1"/>
</dbReference>
<dbReference type="PANTHER" id="PTHR42701">
    <property type="entry name" value="IMIDAZOLE GLYCEROL PHOSPHATE SYNTHASE SUBUNIT HISH"/>
    <property type="match status" value="1"/>
</dbReference>
<dbReference type="PANTHER" id="PTHR42701:SF1">
    <property type="entry name" value="IMIDAZOLE GLYCEROL PHOSPHATE SYNTHASE SUBUNIT HISH"/>
    <property type="match status" value="1"/>
</dbReference>
<dbReference type="Pfam" id="PF00117">
    <property type="entry name" value="GATase"/>
    <property type="match status" value="1"/>
</dbReference>
<dbReference type="PIRSF" id="PIRSF000495">
    <property type="entry name" value="Amidotransf_hisH"/>
    <property type="match status" value="1"/>
</dbReference>
<dbReference type="SUPFAM" id="SSF52317">
    <property type="entry name" value="Class I glutamine amidotransferase-like"/>
    <property type="match status" value="1"/>
</dbReference>
<dbReference type="PROSITE" id="PS51273">
    <property type="entry name" value="GATASE_TYPE_1"/>
    <property type="match status" value="1"/>
</dbReference>
<evidence type="ECO:0000255" key="1">
    <source>
        <dbReference type="HAMAP-Rule" id="MF_00278"/>
    </source>
</evidence>
<keyword id="KW-0028">Amino-acid biosynthesis</keyword>
<keyword id="KW-0963">Cytoplasm</keyword>
<keyword id="KW-0315">Glutamine amidotransferase</keyword>
<keyword id="KW-0368">Histidine biosynthesis</keyword>
<keyword id="KW-0378">Hydrolase</keyword>
<keyword id="KW-0456">Lyase</keyword>